<evidence type="ECO:0000250" key="1"/>
<evidence type="ECO:0000255" key="2">
    <source>
        <dbReference type="PROSITE-ProRule" id="PRU00573"/>
    </source>
</evidence>
<evidence type="ECO:0000305" key="3"/>
<feature type="chain" id="PRO_0000214024" description="Diazepam-binding inhibitor-like 5">
    <location>
        <begin position="1"/>
        <end position="87"/>
    </location>
</feature>
<feature type="domain" description="ACB" evidence="2">
    <location>
        <begin position="2"/>
        <end position="87"/>
    </location>
</feature>
<feature type="binding site" evidence="1">
    <location>
        <begin position="29"/>
        <end position="33"/>
    </location>
    <ligand>
        <name>an acyl-CoA</name>
        <dbReference type="ChEBI" id="CHEBI:58342"/>
    </ligand>
</feature>
<feature type="binding site" evidence="1">
    <location>
        <position position="55"/>
    </location>
    <ligand>
        <name>an acyl-CoA</name>
        <dbReference type="ChEBI" id="CHEBI:58342"/>
    </ligand>
</feature>
<feature type="binding site" evidence="1">
    <location>
        <position position="74"/>
    </location>
    <ligand>
        <name>an acyl-CoA</name>
        <dbReference type="ChEBI" id="CHEBI:58342"/>
    </ligand>
</feature>
<protein>
    <recommendedName>
        <fullName>Diazepam-binding inhibitor-like 5</fullName>
    </recommendedName>
    <alternativeName>
        <fullName>Endozepine-like peptide</fullName>
        <shortName>ELP</shortName>
    </alternativeName>
</protein>
<name>DBIL5_MOUSE</name>
<keyword id="KW-0963">Cytoplasm</keyword>
<keyword id="KW-0446">Lipid-binding</keyword>
<keyword id="KW-1185">Reference proteome</keyword>
<keyword id="KW-0813">Transport</keyword>
<dbReference type="EMBL" id="S83465">
    <property type="protein sequence ID" value="AAB50915.1"/>
    <property type="molecule type" value="mRNA"/>
</dbReference>
<dbReference type="EMBL" id="AF229807">
    <property type="protein sequence ID" value="AAF79124.1"/>
    <property type="molecule type" value="Genomic_DNA"/>
</dbReference>
<dbReference type="EMBL" id="BC048474">
    <property type="protein sequence ID" value="AAH48474.1"/>
    <property type="molecule type" value="mRNA"/>
</dbReference>
<dbReference type="CCDS" id="CCDS25062.1"/>
<dbReference type="RefSeq" id="NP_067269.1">
    <property type="nucleotide sequence ID" value="NM_021294.2"/>
</dbReference>
<dbReference type="SMR" id="O09035"/>
<dbReference type="FunCoup" id="O09035">
    <property type="interactions" value="98"/>
</dbReference>
<dbReference type="STRING" id="10090.ENSMUSP00000039763"/>
<dbReference type="iPTMnet" id="O09035"/>
<dbReference type="PhosphoSitePlus" id="O09035"/>
<dbReference type="PaxDb" id="10090-ENSMUSP00000039763"/>
<dbReference type="PeptideAtlas" id="O09035"/>
<dbReference type="ProteomicsDB" id="279360"/>
<dbReference type="DNASU" id="13168"/>
<dbReference type="Ensembl" id="ENSMUST00000040806.5">
    <property type="protein sequence ID" value="ENSMUSP00000039763.5"/>
    <property type="gene ID" value="ENSMUSG00000038057.5"/>
</dbReference>
<dbReference type="GeneID" id="13168"/>
<dbReference type="KEGG" id="mmu:13168"/>
<dbReference type="UCSC" id="uc007kfk.1">
    <property type="organism name" value="mouse"/>
</dbReference>
<dbReference type="AGR" id="MGI:108039"/>
<dbReference type="CTD" id="13168"/>
<dbReference type="MGI" id="MGI:108039">
    <property type="gene designation" value="Dbil5"/>
</dbReference>
<dbReference type="VEuPathDB" id="HostDB:ENSMUSG00000038057"/>
<dbReference type="eggNOG" id="KOG0817">
    <property type="taxonomic scope" value="Eukaryota"/>
</dbReference>
<dbReference type="GeneTree" id="ENSGT00940000163490"/>
<dbReference type="HOGENOM" id="CLU_118853_4_1_1"/>
<dbReference type="InParanoid" id="O09035"/>
<dbReference type="OMA" id="GDCNIPV"/>
<dbReference type="OrthoDB" id="346910at2759"/>
<dbReference type="PhylomeDB" id="O09035"/>
<dbReference type="TreeFam" id="TF335802"/>
<dbReference type="BioGRID-ORCS" id="13168">
    <property type="hits" value="0 hits in 76 CRISPR screens"/>
</dbReference>
<dbReference type="ChiTaRS" id="Dbil5">
    <property type="organism name" value="mouse"/>
</dbReference>
<dbReference type="PRO" id="PR:O09035"/>
<dbReference type="Proteomes" id="UP000000589">
    <property type="component" value="Chromosome 11"/>
</dbReference>
<dbReference type="RNAct" id="O09035">
    <property type="molecule type" value="protein"/>
</dbReference>
<dbReference type="Bgee" id="ENSMUSG00000038057">
    <property type="expression patterns" value="Expressed in seminiferous tubule of testis and 57 other cell types or tissues"/>
</dbReference>
<dbReference type="ExpressionAtlas" id="O09035">
    <property type="expression patterns" value="baseline and differential"/>
</dbReference>
<dbReference type="GO" id="GO:0005737">
    <property type="term" value="C:cytoplasm"/>
    <property type="evidence" value="ECO:0007669"/>
    <property type="project" value="UniProtKB-SubCell"/>
</dbReference>
<dbReference type="GO" id="GO:0000062">
    <property type="term" value="F:fatty-acyl-CoA binding"/>
    <property type="evidence" value="ECO:0007669"/>
    <property type="project" value="InterPro"/>
</dbReference>
<dbReference type="GO" id="GO:0007283">
    <property type="term" value="P:spermatogenesis"/>
    <property type="evidence" value="ECO:0007669"/>
    <property type="project" value="Ensembl"/>
</dbReference>
<dbReference type="CDD" id="cd00435">
    <property type="entry name" value="ACBP"/>
    <property type="match status" value="1"/>
</dbReference>
<dbReference type="FunFam" id="1.20.80.10:FF:000042">
    <property type="entry name" value="diazepam-binding inhibitor-like 5"/>
    <property type="match status" value="1"/>
</dbReference>
<dbReference type="Gene3D" id="1.20.80.10">
    <property type="match status" value="1"/>
</dbReference>
<dbReference type="InterPro" id="IPR022408">
    <property type="entry name" value="Acyl-CoA-binding_prot_CS"/>
</dbReference>
<dbReference type="InterPro" id="IPR000582">
    <property type="entry name" value="Acyl-CoA-binding_protein"/>
</dbReference>
<dbReference type="InterPro" id="IPR035984">
    <property type="entry name" value="Acyl-CoA-binding_sf"/>
</dbReference>
<dbReference type="InterPro" id="IPR014352">
    <property type="entry name" value="FERM/acyl-CoA-bd_prot_sf"/>
</dbReference>
<dbReference type="PANTHER" id="PTHR23310">
    <property type="entry name" value="ACYL-COA-BINDING PROTEIN, ACBP"/>
    <property type="match status" value="1"/>
</dbReference>
<dbReference type="PANTHER" id="PTHR23310:SF13">
    <property type="entry name" value="DIAZEPAM-BINDING INHIBITOR-LIKE 5"/>
    <property type="match status" value="1"/>
</dbReference>
<dbReference type="Pfam" id="PF00887">
    <property type="entry name" value="ACBP"/>
    <property type="match status" value="1"/>
</dbReference>
<dbReference type="PRINTS" id="PR00689">
    <property type="entry name" value="ACOABINDINGP"/>
</dbReference>
<dbReference type="SUPFAM" id="SSF47027">
    <property type="entry name" value="Acyl-CoA binding protein"/>
    <property type="match status" value="1"/>
</dbReference>
<dbReference type="PROSITE" id="PS00880">
    <property type="entry name" value="ACB_1"/>
    <property type="match status" value="1"/>
</dbReference>
<dbReference type="PROSITE" id="PS51228">
    <property type="entry name" value="ACB_2"/>
    <property type="match status" value="1"/>
</dbReference>
<organism>
    <name type="scientific">Mus musculus</name>
    <name type="common">Mouse</name>
    <dbReference type="NCBI Taxonomy" id="10090"/>
    <lineage>
        <taxon>Eukaryota</taxon>
        <taxon>Metazoa</taxon>
        <taxon>Chordata</taxon>
        <taxon>Craniata</taxon>
        <taxon>Vertebrata</taxon>
        <taxon>Euteleostomi</taxon>
        <taxon>Mammalia</taxon>
        <taxon>Eutheria</taxon>
        <taxon>Euarchontoglires</taxon>
        <taxon>Glires</taxon>
        <taxon>Rodentia</taxon>
        <taxon>Myomorpha</taxon>
        <taxon>Muroidea</taxon>
        <taxon>Muridae</taxon>
        <taxon>Murinae</taxon>
        <taxon>Mus</taxon>
        <taxon>Mus</taxon>
    </lineage>
</organism>
<gene>
    <name type="primary">Dbil5</name>
</gene>
<sequence>MSQVEFEMACASLKQLKGPVSDQEKLLVYSFYKQATQGDCNIPVPPATDVRAKAKYEAWMVNKGMSKMDAMRIYIAKVEELKKKEPC</sequence>
<accession>O09035</accession>
<comment type="function">
    <text>May be involved in the energy metabolism of the mature sperm.</text>
</comment>
<comment type="subcellular location">
    <subcellularLocation>
        <location>Cytoplasm</location>
    </subcellularLocation>
</comment>
<comment type="tissue specificity">
    <text>Exclusively expressed in late spermatids and spermatozoa. Not found in epididymis, spleen, bone marrow, skin, liver, brain, heart, kidney, muscle.</text>
</comment>
<comment type="developmental stage">
    <text>Expression is seen first at day 45 of post-natal development (post-meiotic transcription).</text>
</comment>
<comment type="similarity">
    <text evidence="3">Belongs to the ACBP family.</text>
</comment>
<reference key="1">
    <citation type="journal article" date="1996" name="Mol. Cell. Endocrinol.">
        <title>A novel endozepine-like peptide (ELP) is exclusively expressed in male germ cells.</title>
        <authorList>
            <person name="Pusch W."/>
            <person name="Balvers M."/>
            <person name="Hunt N."/>
            <person name="Ivell R."/>
        </authorList>
    </citation>
    <scope>NUCLEOTIDE SEQUENCE [MRNA]</scope>
    <source>
        <tissue>Testis</tissue>
    </source>
</reference>
<reference key="2">
    <citation type="journal article" date="2000" name="Eur. J. Biochem.">
        <title>Structure and expression of the mouse gene encoding the endozepine-like peptide from haploid male germ cells.</title>
        <authorList>
            <person name="Valentin M."/>
            <person name="Balvers M."/>
            <person name="Pusch W."/>
            <person name="Weinbauer G.F."/>
            <person name="Knudsen J."/>
            <person name="Ivell R."/>
        </authorList>
    </citation>
    <scope>NUCLEOTIDE SEQUENCE [GENOMIC DNA]</scope>
    <source>
        <strain>129/Sv</strain>
    </source>
</reference>
<reference key="3">
    <citation type="journal article" date="2004" name="Genome Res.">
        <title>The status, quality, and expansion of the NIH full-length cDNA project: the Mammalian Gene Collection (MGC).</title>
        <authorList>
            <consortium name="The MGC Project Team"/>
        </authorList>
    </citation>
    <scope>NUCLEOTIDE SEQUENCE [LARGE SCALE MRNA]</scope>
    <source>
        <tissue>Testis</tissue>
    </source>
</reference>
<reference key="4">
    <citation type="journal article" date="2010" name="Cell">
        <title>A tissue-specific atlas of mouse protein phosphorylation and expression.</title>
        <authorList>
            <person name="Huttlin E.L."/>
            <person name="Jedrychowski M.P."/>
            <person name="Elias J.E."/>
            <person name="Goswami T."/>
            <person name="Rad R."/>
            <person name="Beausoleil S.A."/>
            <person name="Villen J."/>
            <person name="Haas W."/>
            <person name="Sowa M.E."/>
            <person name="Gygi S.P."/>
        </authorList>
    </citation>
    <scope>IDENTIFICATION BY MASS SPECTROMETRY [LARGE SCALE ANALYSIS]</scope>
    <source>
        <tissue>Testis</tissue>
    </source>
</reference>
<proteinExistence type="evidence at protein level"/>